<evidence type="ECO:0000250" key="1"/>
<evidence type="ECO:0000250" key="2">
    <source>
        <dbReference type="UniProtKB" id="G5BQH5"/>
    </source>
</evidence>
<evidence type="ECO:0000250" key="3">
    <source>
        <dbReference type="UniProtKB" id="P02647"/>
    </source>
</evidence>
<evidence type="ECO:0000250" key="4">
    <source>
        <dbReference type="UniProtKB" id="P02648"/>
    </source>
</evidence>
<evidence type="ECO:0000250" key="5">
    <source>
        <dbReference type="UniProtKB" id="P04639"/>
    </source>
</evidence>
<evidence type="ECO:0000255" key="6"/>
<evidence type="ECO:0000305" key="7"/>
<name>APOA1_FUKDA</name>
<organism>
    <name type="scientific">Fukomys damarensis</name>
    <name type="common">Damaraland mole rat</name>
    <name type="synonym">Cryptomys damarensis</name>
    <dbReference type="NCBI Taxonomy" id="885580"/>
    <lineage>
        <taxon>Eukaryota</taxon>
        <taxon>Metazoa</taxon>
        <taxon>Chordata</taxon>
        <taxon>Craniata</taxon>
        <taxon>Vertebrata</taxon>
        <taxon>Euteleostomi</taxon>
        <taxon>Mammalia</taxon>
        <taxon>Eutheria</taxon>
        <taxon>Euarchontoglires</taxon>
        <taxon>Glires</taxon>
        <taxon>Rodentia</taxon>
        <taxon>Hystricomorpha</taxon>
        <taxon>Bathyergidae</taxon>
        <taxon>Fukomys</taxon>
    </lineage>
</organism>
<reference key="1">
    <citation type="submission" date="2013-11" db="EMBL/GenBank/DDBJ databases">
        <title>The Damaraland mole rat (Fukomys damarensis) genome and evolution of African mole rats.</title>
        <authorList>
            <person name="Gladyshev V.N."/>
            <person name="Fang X."/>
        </authorList>
    </citation>
    <scope>NUCLEOTIDE SEQUENCE [LARGE SCALE GENOMIC DNA]</scope>
    <source>
        <tissue>Liver</tissue>
    </source>
</reference>
<reference key="2">
    <citation type="unpublished observations" date="2020-03">
        <authorList>
            <person name="Puppione D.L."/>
        </authorList>
    </citation>
    <scope>IDENTIFICATION</scope>
</reference>
<protein>
    <recommendedName>
        <fullName>Apolipoprotein A-I</fullName>
        <shortName>Apo-AI</shortName>
        <shortName>ApoA-I</shortName>
    </recommendedName>
    <alternativeName>
        <fullName>Apolipoprotein A1</fullName>
    </alternativeName>
    <component>
        <recommendedName>
            <fullName>Proapolipoprotein A-I</fullName>
            <shortName>ProapoA-I</shortName>
        </recommendedName>
    </component>
    <component>
        <recommendedName>
            <fullName>Truncated apolipoprotein A-I</fullName>
        </recommendedName>
    </component>
</protein>
<accession>P0DTU7</accession>
<proteinExistence type="inferred from homology"/>
<dbReference type="EMBL" id="AYUG01101138">
    <property type="status" value="NOT_ANNOTATED_CDS"/>
    <property type="molecule type" value="Genomic_DNA"/>
</dbReference>
<dbReference type="RefSeq" id="XP_010627698.1">
    <property type="nucleotide sequence ID" value="XM_010629396.2"/>
</dbReference>
<dbReference type="SMR" id="P0DTU7"/>
<dbReference type="GeneID" id="104865719"/>
<dbReference type="CTD" id="335"/>
<dbReference type="OMA" id="EYVAQFE"/>
<dbReference type="OrthoDB" id="8727817at2759"/>
<dbReference type="GO" id="GO:0042627">
    <property type="term" value="C:chylomicron"/>
    <property type="evidence" value="ECO:0007669"/>
    <property type="project" value="TreeGrafter"/>
</dbReference>
<dbReference type="GO" id="GO:1903561">
    <property type="term" value="C:extracellular vesicle"/>
    <property type="evidence" value="ECO:0007669"/>
    <property type="project" value="TreeGrafter"/>
</dbReference>
<dbReference type="GO" id="GO:0034364">
    <property type="term" value="C:high-density lipoprotein particle"/>
    <property type="evidence" value="ECO:0007669"/>
    <property type="project" value="UniProtKB-KW"/>
</dbReference>
<dbReference type="GO" id="GO:0034362">
    <property type="term" value="C:low-density lipoprotein particle"/>
    <property type="evidence" value="ECO:0007669"/>
    <property type="project" value="TreeGrafter"/>
</dbReference>
<dbReference type="GO" id="GO:0034361">
    <property type="term" value="C:very-low-density lipoprotein particle"/>
    <property type="evidence" value="ECO:0007669"/>
    <property type="project" value="TreeGrafter"/>
</dbReference>
<dbReference type="GO" id="GO:0120020">
    <property type="term" value="F:cholesterol transfer activity"/>
    <property type="evidence" value="ECO:0007669"/>
    <property type="project" value="TreeGrafter"/>
</dbReference>
<dbReference type="GO" id="GO:0060228">
    <property type="term" value="F:phosphatidylcholine-sterol O-acyltransferase activator activity"/>
    <property type="evidence" value="ECO:0007669"/>
    <property type="project" value="TreeGrafter"/>
</dbReference>
<dbReference type="GO" id="GO:0005543">
    <property type="term" value="F:phospholipid binding"/>
    <property type="evidence" value="ECO:0007669"/>
    <property type="project" value="TreeGrafter"/>
</dbReference>
<dbReference type="GO" id="GO:0042803">
    <property type="term" value="F:protein homodimerization activity"/>
    <property type="evidence" value="ECO:0000250"/>
    <property type="project" value="UniProtKB"/>
</dbReference>
<dbReference type="GO" id="GO:0055090">
    <property type="term" value="P:acylglycerol homeostasis"/>
    <property type="evidence" value="ECO:0007669"/>
    <property type="project" value="TreeGrafter"/>
</dbReference>
<dbReference type="GO" id="GO:0033344">
    <property type="term" value="P:cholesterol efflux"/>
    <property type="evidence" value="ECO:0007669"/>
    <property type="project" value="TreeGrafter"/>
</dbReference>
<dbReference type="GO" id="GO:0008203">
    <property type="term" value="P:cholesterol metabolic process"/>
    <property type="evidence" value="ECO:0007669"/>
    <property type="project" value="UniProtKB-KW"/>
</dbReference>
<dbReference type="GO" id="GO:0042157">
    <property type="term" value="P:lipoprotein metabolic process"/>
    <property type="evidence" value="ECO:0007669"/>
    <property type="project" value="InterPro"/>
</dbReference>
<dbReference type="GO" id="GO:0033700">
    <property type="term" value="P:phospholipid efflux"/>
    <property type="evidence" value="ECO:0007669"/>
    <property type="project" value="TreeGrafter"/>
</dbReference>
<dbReference type="FunFam" id="1.20.120.20:FF:000001">
    <property type="entry name" value="Apolipoprotein A-I"/>
    <property type="match status" value="1"/>
</dbReference>
<dbReference type="Gene3D" id="6.10.140.380">
    <property type="match status" value="1"/>
</dbReference>
<dbReference type="Gene3D" id="1.20.120.20">
    <property type="entry name" value="Apolipoprotein"/>
    <property type="match status" value="1"/>
</dbReference>
<dbReference type="InterPro" id="IPR000074">
    <property type="entry name" value="ApoA_E"/>
</dbReference>
<dbReference type="InterPro" id="IPR050163">
    <property type="entry name" value="Apolipoprotein_A1/A4/E"/>
</dbReference>
<dbReference type="PANTHER" id="PTHR18976">
    <property type="entry name" value="APOLIPOPROTEIN"/>
    <property type="match status" value="1"/>
</dbReference>
<dbReference type="PANTHER" id="PTHR18976:SF11">
    <property type="entry name" value="APOLIPOPROTEIN A-I"/>
    <property type="match status" value="1"/>
</dbReference>
<dbReference type="Pfam" id="PF01442">
    <property type="entry name" value="Apolipoprotein"/>
    <property type="match status" value="1"/>
</dbReference>
<dbReference type="SUPFAM" id="SSF58113">
    <property type="entry name" value="Apolipoprotein A-I"/>
    <property type="match status" value="1"/>
</dbReference>
<sequence length="264" mass="30685">MKAVVLAVAVLFLTGSQARHFWQRDEPQTSWDRVKDFATMYVDVIQESGKDYVAQLDASTLGKQLNLNLLENWDTLSSAFSKLREQLGHVSQEFWDTFEKDTAWLREEMNKDLEKVKKKVQPFLDSFQEKMQEEVKRYRHKVEPLSLELRDGAHQQLKELQEKLGPLGKDLKDHALVHMDELRSHLRTYTEEMGQILAERLGAIKESTSLAEYQTKASEHLRTFSKKAKPILEDLRQGLLPVAENFKTNIKNTFDQITKHVTTQ</sequence>
<gene>
    <name type="primary">Apoa1</name>
</gene>
<feature type="signal peptide" evidence="6">
    <location>
        <begin position="1"/>
        <end position="18"/>
    </location>
</feature>
<feature type="chain" id="PRO_0000450137" description="Proapolipoprotein A-I">
    <location>
        <begin position="19"/>
        <end position="264"/>
    </location>
</feature>
<feature type="chain" id="PRO_0000450138" description="Apolipoprotein A-I">
    <location>
        <begin position="25"/>
        <end position="264"/>
    </location>
</feature>
<feature type="chain" id="PRO_0000450139" description="Truncated apolipoprotein A-I" evidence="3">
    <location>
        <begin position="25"/>
        <end position="263"/>
    </location>
</feature>
<feature type="repeat" description="1">
    <location>
        <begin position="67"/>
        <end position="88"/>
    </location>
</feature>
<feature type="repeat" description="2">
    <location>
        <begin position="89"/>
        <end position="110"/>
    </location>
</feature>
<feature type="repeat" description="3; half-length">
    <location>
        <begin position="111"/>
        <end position="121"/>
    </location>
</feature>
<feature type="repeat" description="4">
    <location>
        <begin position="122"/>
        <end position="143"/>
    </location>
</feature>
<feature type="repeat" description="5">
    <location>
        <begin position="144"/>
        <end position="165"/>
    </location>
</feature>
<feature type="repeat" description="6">
    <location>
        <begin position="166"/>
        <end position="187"/>
    </location>
</feature>
<feature type="repeat" description="7; truncated">
    <location>
        <begin position="188"/>
        <end position="207"/>
    </location>
</feature>
<feature type="repeat" description="8">
    <location>
        <begin position="208"/>
        <end position="229"/>
    </location>
</feature>
<feature type="repeat" description="9; half-length">
    <location>
        <begin position="230"/>
        <end position="240"/>
    </location>
</feature>
<feature type="repeat" description="10">
    <location>
        <begin position="241"/>
        <end position="264"/>
    </location>
</feature>
<feature type="region of interest" description="10 X approximate tandem repeats">
    <location>
        <begin position="67"/>
        <end position="264"/>
    </location>
</feature>
<feature type="modified residue" description="Methionine sulfoxide" evidence="3">
    <location>
        <position position="109"/>
    </location>
</feature>
<feature type="modified residue" description="Methionine sulfoxide" evidence="3">
    <location>
        <position position="193"/>
    </location>
</feature>
<keyword id="KW-0153">Cholesterol metabolism</keyword>
<keyword id="KW-0325">Glycoprotein</keyword>
<keyword id="KW-0345">HDL</keyword>
<keyword id="KW-0443">Lipid metabolism</keyword>
<keyword id="KW-0445">Lipid transport</keyword>
<keyword id="KW-0449">Lipoprotein</keyword>
<keyword id="KW-0558">Oxidation</keyword>
<keyword id="KW-0564">Palmitate</keyword>
<keyword id="KW-0597">Phosphoprotein</keyword>
<keyword id="KW-0677">Repeat</keyword>
<keyword id="KW-0964">Secreted</keyword>
<keyword id="KW-0732">Signal</keyword>
<keyword id="KW-0753">Steroid metabolism</keyword>
<keyword id="KW-1207">Sterol metabolism</keyword>
<keyword id="KW-0813">Transport</keyword>
<comment type="function">
    <text evidence="3">Participates in the reverse transport of cholesterol from tissues to the liver for excretion by promoting cholesterol efflux from tissues and by acting as a cofactor for the lecithin cholesterol acyltransferase (LCAT). As part of the SPAP complex, activates spermatozoa motility.</text>
</comment>
<comment type="subunit">
    <text evidence="2 3 5">Homodimer (By similarity). Interacts with APOA1BP and CLU. Component of a sperm activating protein complex (SPAP), consisting of APOA1, an immunoglobulin heavy chain, an immunoglobulin light chain and albumin. Interacts with NDRG1. Interacts with SCGB3A2 (By similarity). Interacts with NAXE and YJEFN3 (By similarity).</text>
</comment>
<comment type="subcellular location">
    <subcellularLocation>
        <location evidence="3">Secreted</location>
    </subcellularLocation>
</comment>
<comment type="PTM">
    <text evidence="4">Glycosylated.</text>
</comment>
<comment type="PTM">
    <text evidence="4">Palmitoylated.</text>
</comment>
<comment type="PTM">
    <text evidence="1">Phosphorylation sites are present in the extracellular medium.</text>
</comment>
<comment type="similarity">
    <text evidence="7">Belongs to the apolipoprotein A1/A4/E family.</text>
</comment>